<keyword id="KW-0560">Oxidoreductase</keyword>
<keyword id="KW-0884">PQQ biosynthesis</keyword>
<evidence type="ECO:0000255" key="1">
    <source>
        <dbReference type="HAMAP-Rule" id="MF_00654"/>
    </source>
</evidence>
<proteinExistence type="inferred from homology"/>
<sequence>MTALLGPDQLEADLRAIGARLYHDQHPFHALLHHGKLDRGQVQAWALNRFEYQRCIPLKDAAILARMEDPALRRIWRQRILDHDGNSASDGGIARWLHLTDALGLDRTLVESGRALLPGTRFAVQAYLHFVREKSLLEAIASSLTELFAPNIIGQRVAGMLKHYDFVSSEALAYFEHRLTEAPRDSDFALDYVKQHADTVEKQALVKAALHFKCSVLWAQLDALHVAYVAPGIVWPDAFVPDRDASRVAA</sequence>
<feature type="chain" id="PRO_0000219989" description="Pyrroloquinoline-quinone synthase">
    <location>
        <begin position="1"/>
        <end position="250"/>
    </location>
</feature>
<comment type="function">
    <text evidence="1">Ring cyclization and eight-electron oxidation of 3a-(2-amino-2-carboxyethyl)-4,5-dioxo-4,5,6,7,8,9-hexahydroquinoline-7,9-dicarboxylic-acid to PQQ.</text>
</comment>
<comment type="catalytic activity">
    <reaction evidence="1">
        <text>6-(2-amino-2-carboxyethyl)-7,8-dioxo-1,2,3,4,7,8-hexahydroquinoline-2,4-dicarboxylate + 3 O2 = pyrroloquinoline quinone + 2 H2O2 + 2 H2O + H(+)</text>
        <dbReference type="Rhea" id="RHEA:10692"/>
        <dbReference type="ChEBI" id="CHEBI:15377"/>
        <dbReference type="ChEBI" id="CHEBI:15378"/>
        <dbReference type="ChEBI" id="CHEBI:15379"/>
        <dbReference type="ChEBI" id="CHEBI:16240"/>
        <dbReference type="ChEBI" id="CHEBI:58442"/>
        <dbReference type="ChEBI" id="CHEBI:58778"/>
        <dbReference type="EC" id="1.3.3.11"/>
    </reaction>
</comment>
<comment type="pathway">
    <text evidence="1">Cofactor biosynthesis; pyrroloquinoline quinone biosynthesis.</text>
</comment>
<comment type="similarity">
    <text evidence="1">Belongs to the PqqC family.</text>
</comment>
<name>PQQC_XANAC</name>
<gene>
    <name evidence="1" type="primary">pqqC</name>
    <name type="ordered locus">XAC3115</name>
</gene>
<reference key="1">
    <citation type="journal article" date="2002" name="Nature">
        <title>Comparison of the genomes of two Xanthomonas pathogens with differing host specificities.</title>
        <authorList>
            <person name="da Silva A.C.R."/>
            <person name="Ferro J.A."/>
            <person name="Reinach F.C."/>
            <person name="Farah C.S."/>
            <person name="Furlan L.R."/>
            <person name="Quaggio R.B."/>
            <person name="Monteiro-Vitorello C.B."/>
            <person name="Van Sluys M.A."/>
            <person name="Almeida N.F. Jr."/>
            <person name="Alves L.M.C."/>
            <person name="do Amaral A.M."/>
            <person name="Bertolini M.C."/>
            <person name="Camargo L.E.A."/>
            <person name="Camarotte G."/>
            <person name="Cannavan F."/>
            <person name="Cardozo J."/>
            <person name="Chambergo F."/>
            <person name="Ciapina L.P."/>
            <person name="Cicarelli R.M.B."/>
            <person name="Coutinho L.L."/>
            <person name="Cursino-Santos J.R."/>
            <person name="El-Dorry H."/>
            <person name="Faria J.B."/>
            <person name="Ferreira A.J.S."/>
            <person name="Ferreira R.C.C."/>
            <person name="Ferro M.I.T."/>
            <person name="Formighieri E.F."/>
            <person name="Franco M.C."/>
            <person name="Greggio C.C."/>
            <person name="Gruber A."/>
            <person name="Katsuyama A.M."/>
            <person name="Kishi L.T."/>
            <person name="Leite R.P."/>
            <person name="Lemos E.G.M."/>
            <person name="Lemos M.V.F."/>
            <person name="Locali E.C."/>
            <person name="Machado M.A."/>
            <person name="Madeira A.M.B.N."/>
            <person name="Martinez-Rossi N.M."/>
            <person name="Martins E.C."/>
            <person name="Meidanis J."/>
            <person name="Menck C.F.M."/>
            <person name="Miyaki C.Y."/>
            <person name="Moon D.H."/>
            <person name="Moreira L.M."/>
            <person name="Novo M.T.M."/>
            <person name="Okura V.K."/>
            <person name="Oliveira M.C."/>
            <person name="Oliveira V.R."/>
            <person name="Pereira H.A."/>
            <person name="Rossi A."/>
            <person name="Sena J.A.D."/>
            <person name="Silva C."/>
            <person name="de Souza R.F."/>
            <person name="Spinola L.A.F."/>
            <person name="Takita M.A."/>
            <person name="Tamura R.E."/>
            <person name="Teixeira E.C."/>
            <person name="Tezza R.I.D."/>
            <person name="Trindade dos Santos M."/>
            <person name="Truffi D."/>
            <person name="Tsai S.M."/>
            <person name="White F.F."/>
            <person name="Setubal J.C."/>
            <person name="Kitajima J.P."/>
        </authorList>
    </citation>
    <scope>NUCLEOTIDE SEQUENCE [LARGE SCALE GENOMIC DNA]</scope>
    <source>
        <strain>306</strain>
    </source>
</reference>
<protein>
    <recommendedName>
        <fullName evidence="1">Pyrroloquinoline-quinone synthase</fullName>
        <ecNumber evidence="1">1.3.3.11</ecNumber>
    </recommendedName>
    <alternativeName>
        <fullName evidence="1">Coenzyme PQQ synthesis protein C</fullName>
    </alternativeName>
    <alternativeName>
        <fullName evidence="1">Pyrroloquinoline quinone biosynthesis protein C</fullName>
    </alternativeName>
</protein>
<organism>
    <name type="scientific">Xanthomonas axonopodis pv. citri (strain 306)</name>
    <dbReference type="NCBI Taxonomy" id="190486"/>
    <lineage>
        <taxon>Bacteria</taxon>
        <taxon>Pseudomonadati</taxon>
        <taxon>Pseudomonadota</taxon>
        <taxon>Gammaproteobacteria</taxon>
        <taxon>Lysobacterales</taxon>
        <taxon>Lysobacteraceae</taxon>
        <taxon>Xanthomonas</taxon>
    </lineage>
</organism>
<accession>Q8PHY3</accession>
<dbReference type="EC" id="1.3.3.11" evidence="1"/>
<dbReference type="EMBL" id="AE008923">
    <property type="protein sequence ID" value="AAM37960.1"/>
    <property type="molecule type" value="Genomic_DNA"/>
</dbReference>
<dbReference type="RefSeq" id="WP_011052046.1">
    <property type="nucleotide sequence ID" value="NC_003919.1"/>
</dbReference>
<dbReference type="SMR" id="Q8PHY3"/>
<dbReference type="GeneID" id="66912182"/>
<dbReference type="KEGG" id="xac:XAC3115"/>
<dbReference type="eggNOG" id="COG5424">
    <property type="taxonomic scope" value="Bacteria"/>
</dbReference>
<dbReference type="HOGENOM" id="CLU_080136_0_0_6"/>
<dbReference type="UniPathway" id="UPA00539"/>
<dbReference type="Proteomes" id="UP000000576">
    <property type="component" value="Chromosome"/>
</dbReference>
<dbReference type="GO" id="GO:0033732">
    <property type="term" value="F:pyrroloquinoline-quinone synthase activity"/>
    <property type="evidence" value="ECO:0007669"/>
    <property type="project" value="UniProtKB-EC"/>
</dbReference>
<dbReference type="GO" id="GO:0018189">
    <property type="term" value="P:pyrroloquinoline quinone biosynthetic process"/>
    <property type="evidence" value="ECO:0007669"/>
    <property type="project" value="UniProtKB-UniRule"/>
</dbReference>
<dbReference type="GO" id="GO:0006790">
    <property type="term" value="P:sulfur compound metabolic process"/>
    <property type="evidence" value="ECO:0007669"/>
    <property type="project" value="UniProtKB-ARBA"/>
</dbReference>
<dbReference type="Gene3D" id="1.20.910.10">
    <property type="entry name" value="Heme oxygenase-like"/>
    <property type="match status" value="1"/>
</dbReference>
<dbReference type="HAMAP" id="MF_00654">
    <property type="entry name" value="PQQ_syn_PqqC"/>
    <property type="match status" value="1"/>
</dbReference>
<dbReference type="InterPro" id="IPR016084">
    <property type="entry name" value="Haem_Oase-like_multi-hlx"/>
</dbReference>
<dbReference type="InterPro" id="IPR011845">
    <property type="entry name" value="PqqC"/>
</dbReference>
<dbReference type="InterPro" id="IPR039068">
    <property type="entry name" value="PqqC-like"/>
</dbReference>
<dbReference type="InterPro" id="IPR004305">
    <property type="entry name" value="Thiaminase-2/PQQC"/>
</dbReference>
<dbReference type="NCBIfam" id="TIGR02111">
    <property type="entry name" value="PQQ_syn_pqqC"/>
    <property type="match status" value="1"/>
</dbReference>
<dbReference type="PANTHER" id="PTHR40279:SF3">
    <property type="entry name" value="4-AMINOBENZOATE SYNTHASE"/>
    <property type="match status" value="1"/>
</dbReference>
<dbReference type="PANTHER" id="PTHR40279">
    <property type="entry name" value="PQQC-LIKE PROTEIN"/>
    <property type="match status" value="1"/>
</dbReference>
<dbReference type="Pfam" id="PF03070">
    <property type="entry name" value="TENA_THI-4"/>
    <property type="match status" value="1"/>
</dbReference>
<dbReference type="SUPFAM" id="SSF48613">
    <property type="entry name" value="Heme oxygenase-like"/>
    <property type="match status" value="1"/>
</dbReference>